<feature type="chain" id="PRO_0000182890" description="Deoxyuridine 5'-triphosphate nucleotidohydrolase">
    <location>
        <begin position="1"/>
        <end position="151"/>
    </location>
</feature>
<feature type="binding site" evidence="1">
    <location>
        <begin position="70"/>
        <end position="72"/>
    </location>
    <ligand>
        <name>substrate</name>
    </ligand>
</feature>
<feature type="binding site" evidence="1">
    <location>
        <position position="83"/>
    </location>
    <ligand>
        <name>substrate</name>
    </ligand>
</feature>
<feature type="binding site" evidence="1">
    <location>
        <begin position="87"/>
        <end position="89"/>
    </location>
    <ligand>
        <name>substrate</name>
    </ligand>
</feature>
<feature type="binding site" evidence="1">
    <location>
        <position position="97"/>
    </location>
    <ligand>
        <name>substrate</name>
    </ligand>
</feature>
<organism>
    <name type="scientific">Pasteurella multocida (strain Pm70)</name>
    <dbReference type="NCBI Taxonomy" id="272843"/>
    <lineage>
        <taxon>Bacteria</taxon>
        <taxon>Pseudomonadati</taxon>
        <taxon>Pseudomonadota</taxon>
        <taxon>Gammaproteobacteria</taxon>
        <taxon>Pasteurellales</taxon>
        <taxon>Pasteurellaceae</taxon>
        <taxon>Pasteurella</taxon>
    </lineage>
</organism>
<reference key="1">
    <citation type="journal article" date="2001" name="Proc. Natl. Acad. Sci. U.S.A.">
        <title>Complete genomic sequence of Pasteurella multocida Pm70.</title>
        <authorList>
            <person name="May B.J."/>
            <person name="Zhang Q."/>
            <person name="Li L.L."/>
            <person name="Paustian M.L."/>
            <person name="Whittam T.S."/>
            <person name="Kapur V."/>
        </authorList>
    </citation>
    <scope>NUCLEOTIDE SEQUENCE [LARGE SCALE GENOMIC DNA]</scope>
    <source>
        <strain>Pm70</strain>
    </source>
</reference>
<dbReference type="EC" id="3.6.1.23" evidence="1"/>
<dbReference type="EMBL" id="AE004439">
    <property type="protein sequence ID" value="AAK03238.1"/>
    <property type="molecule type" value="Genomic_DNA"/>
</dbReference>
<dbReference type="RefSeq" id="WP_010907049.1">
    <property type="nucleotide sequence ID" value="NC_002663.1"/>
</dbReference>
<dbReference type="SMR" id="P57914"/>
<dbReference type="STRING" id="272843.PM1154"/>
<dbReference type="EnsemblBacteria" id="AAK03238">
    <property type="protein sequence ID" value="AAK03238"/>
    <property type="gene ID" value="PM1154"/>
</dbReference>
<dbReference type="KEGG" id="pmu:PM1154"/>
<dbReference type="PATRIC" id="fig|272843.6.peg.1165"/>
<dbReference type="HOGENOM" id="CLU_068508_1_1_6"/>
<dbReference type="OrthoDB" id="9809956at2"/>
<dbReference type="UniPathway" id="UPA00610">
    <property type="reaction ID" value="UER00666"/>
</dbReference>
<dbReference type="Proteomes" id="UP000000809">
    <property type="component" value="Chromosome"/>
</dbReference>
<dbReference type="GO" id="GO:0004170">
    <property type="term" value="F:dUTP diphosphatase activity"/>
    <property type="evidence" value="ECO:0007669"/>
    <property type="project" value="UniProtKB-UniRule"/>
</dbReference>
<dbReference type="GO" id="GO:0000287">
    <property type="term" value="F:magnesium ion binding"/>
    <property type="evidence" value="ECO:0007669"/>
    <property type="project" value="UniProtKB-UniRule"/>
</dbReference>
<dbReference type="GO" id="GO:0006226">
    <property type="term" value="P:dUMP biosynthetic process"/>
    <property type="evidence" value="ECO:0007669"/>
    <property type="project" value="UniProtKB-UniRule"/>
</dbReference>
<dbReference type="GO" id="GO:0046081">
    <property type="term" value="P:dUTP catabolic process"/>
    <property type="evidence" value="ECO:0007669"/>
    <property type="project" value="InterPro"/>
</dbReference>
<dbReference type="CDD" id="cd07557">
    <property type="entry name" value="trimeric_dUTPase"/>
    <property type="match status" value="1"/>
</dbReference>
<dbReference type="FunFam" id="2.70.40.10:FF:000002">
    <property type="entry name" value="dUTP diphosphatase"/>
    <property type="match status" value="1"/>
</dbReference>
<dbReference type="Gene3D" id="2.70.40.10">
    <property type="match status" value="1"/>
</dbReference>
<dbReference type="HAMAP" id="MF_00116">
    <property type="entry name" value="dUTPase_bact"/>
    <property type="match status" value="1"/>
</dbReference>
<dbReference type="InterPro" id="IPR008181">
    <property type="entry name" value="dUTPase"/>
</dbReference>
<dbReference type="InterPro" id="IPR029054">
    <property type="entry name" value="dUTPase-like"/>
</dbReference>
<dbReference type="InterPro" id="IPR036157">
    <property type="entry name" value="dUTPase-like_sf"/>
</dbReference>
<dbReference type="InterPro" id="IPR033704">
    <property type="entry name" value="dUTPase_trimeric"/>
</dbReference>
<dbReference type="NCBIfam" id="TIGR00576">
    <property type="entry name" value="dut"/>
    <property type="match status" value="1"/>
</dbReference>
<dbReference type="NCBIfam" id="NF001862">
    <property type="entry name" value="PRK00601.1"/>
    <property type="match status" value="1"/>
</dbReference>
<dbReference type="PANTHER" id="PTHR11241">
    <property type="entry name" value="DEOXYURIDINE 5'-TRIPHOSPHATE NUCLEOTIDOHYDROLASE"/>
    <property type="match status" value="1"/>
</dbReference>
<dbReference type="PANTHER" id="PTHR11241:SF0">
    <property type="entry name" value="DEOXYURIDINE 5'-TRIPHOSPHATE NUCLEOTIDOHYDROLASE"/>
    <property type="match status" value="1"/>
</dbReference>
<dbReference type="Pfam" id="PF00692">
    <property type="entry name" value="dUTPase"/>
    <property type="match status" value="1"/>
</dbReference>
<dbReference type="SUPFAM" id="SSF51283">
    <property type="entry name" value="dUTPase-like"/>
    <property type="match status" value="1"/>
</dbReference>
<name>DUT_PASMU</name>
<accession>P57914</accession>
<gene>
    <name evidence="1" type="primary">dut</name>
    <name type="ordered locus">PM1154</name>
</gene>
<comment type="function">
    <text evidence="1">This enzyme is involved in nucleotide metabolism: it produces dUMP, the immediate precursor of thymidine nucleotides and it decreases the intracellular concentration of dUTP so that uracil cannot be incorporated into DNA.</text>
</comment>
<comment type="catalytic activity">
    <reaction evidence="1">
        <text>dUTP + H2O = dUMP + diphosphate + H(+)</text>
        <dbReference type="Rhea" id="RHEA:10248"/>
        <dbReference type="ChEBI" id="CHEBI:15377"/>
        <dbReference type="ChEBI" id="CHEBI:15378"/>
        <dbReference type="ChEBI" id="CHEBI:33019"/>
        <dbReference type="ChEBI" id="CHEBI:61555"/>
        <dbReference type="ChEBI" id="CHEBI:246422"/>
        <dbReference type="EC" id="3.6.1.23"/>
    </reaction>
</comment>
<comment type="cofactor">
    <cofactor evidence="1">
        <name>Mg(2+)</name>
        <dbReference type="ChEBI" id="CHEBI:18420"/>
    </cofactor>
</comment>
<comment type="pathway">
    <text evidence="1">Pyrimidine metabolism; dUMP biosynthesis; dUMP from dCTP (dUTP route): step 2/2.</text>
</comment>
<comment type="similarity">
    <text evidence="1">Belongs to the dUTPase family.</text>
</comment>
<protein>
    <recommendedName>
        <fullName evidence="1">Deoxyuridine 5'-triphosphate nucleotidohydrolase</fullName>
        <shortName evidence="1">dUTPase</shortName>
        <ecNumber evidence="1">3.6.1.23</ecNumber>
    </recommendedName>
    <alternativeName>
        <fullName evidence="1">dUTP pyrophosphatase</fullName>
    </alternativeName>
</protein>
<sequence>MKKIDVKILDQRIGTEFPLPTYATEGSAGLDLRALIDAPMTVEAGQTVLIPTGLSLYIADPTLAAVILPRSGLGHKHGIVLGNLVGLIDSDYQGPLMVSLWNRSTEPFKVEVGDRIAQLVFVPVVQAEFNVVSDFAQTERGEGGFGHSGKQ</sequence>
<evidence type="ECO:0000255" key="1">
    <source>
        <dbReference type="HAMAP-Rule" id="MF_00116"/>
    </source>
</evidence>
<keyword id="KW-0378">Hydrolase</keyword>
<keyword id="KW-0460">Magnesium</keyword>
<keyword id="KW-0479">Metal-binding</keyword>
<keyword id="KW-0546">Nucleotide metabolism</keyword>
<keyword id="KW-1185">Reference proteome</keyword>
<proteinExistence type="inferred from homology"/>